<dbReference type="EMBL" id="CP000390">
    <property type="protein sequence ID" value="ABG63062.1"/>
    <property type="molecule type" value="Genomic_DNA"/>
</dbReference>
<dbReference type="SMR" id="Q11HR3"/>
<dbReference type="STRING" id="266779.Meso_1667"/>
<dbReference type="KEGG" id="mes:Meso_1667"/>
<dbReference type="eggNOG" id="COG0198">
    <property type="taxonomic scope" value="Bacteria"/>
</dbReference>
<dbReference type="HOGENOM" id="CLU_093315_2_2_5"/>
<dbReference type="OrthoDB" id="9807419at2"/>
<dbReference type="GO" id="GO:1990904">
    <property type="term" value="C:ribonucleoprotein complex"/>
    <property type="evidence" value="ECO:0007669"/>
    <property type="project" value="UniProtKB-KW"/>
</dbReference>
<dbReference type="GO" id="GO:0005840">
    <property type="term" value="C:ribosome"/>
    <property type="evidence" value="ECO:0007669"/>
    <property type="project" value="UniProtKB-KW"/>
</dbReference>
<dbReference type="GO" id="GO:0019843">
    <property type="term" value="F:rRNA binding"/>
    <property type="evidence" value="ECO:0007669"/>
    <property type="project" value="UniProtKB-UniRule"/>
</dbReference>
<dbReference type="GO" id="GO:0003735">
    <property type="term" value="F:structural constituent of ribosome"/>
    <property type="evidence" value="ECO:0007669"/>
    <property type="project" value="InterPro"/>
</dbReference>
<dbReference type="GO" id="GO:0006412">
    <property type="term" value="P:translation"/>
    <property type="evidence" value="ECO:0007669"/>
    <property type="project" value="UniProtKB-UniRule"/>
</dbReference>
<dbReference type="CDD" id="cd06089">
    <property type="entry name" value="KOW_RPL26"/>
    <property type="match status" value="1"/>
</dbReference>
<dbReference type="FunFam" id="2.30.30.30:FF:000004">
    <property type="entry name" value="50S ribosomal protein L24"/>
    <property type="match status" value="1"/>
</dbReference>
<dbReference type="Gene3D" id="2.30.30.30">
    <property type="match status" value="1"/>
</dbReference>
<dbReference type="HAMAP" id="MF_01326_B">
    <property type="entry name" value="Ribosomal_uL24_B"/>
    <property type="match status" value="1"/>
</dbReference>
<dbReference type="InterPro" id="IPR005824">
    <property type="entry name" value="KOW"/>
</dbReference>
<dbReference type="InterPro" id="IPR014722">
    <property type="entry name" value="Rib_uL2_dom2"/>
</dbReference>
<dbReference type="InterPro" id="IPR003256">
    <property type="entry name" value="Ribosomal_uL24"/>
</dbReference>
<dbReference type="InterPro" id="IPR005825">
    <property type="entry name" value="Ribosomal_uL24_CS"/>
</dbReference>
<dbReference type="InterPro" id="IPR041988">
    <property type="entry name" value="Ribosomal_uL24_KOW"/>
</dbReference>
<dbReference type="InterPro" id="IPR008991">
    <property type="entry name" value="Translation_prot_SH3-like_sf"/>
</dbReference>
<dbReference type="NCBIfam" id="TIGR01079">
    <property type="entry name" value="rplX_bact"/>
    <property type="match status" value="1"/>
</dbReference>
<dbReference type="PANTHER" id="PTHR12903">
    <property type="entry name" value="MITOCHONDRIAL RIBOSOMAL PROTEIN L24"/>
    <property type="match status" value="1"/>
</dbReference>
<dbReference type="Pfam" id="PF00467">
    <property type="entry name" value="KOW"/>
    <property type="match status" value="1"/>
</dbReference>
<dbReference type="Pfam" id="PF17136">
    <property type="entry name" value="ribosomal_L24"/>
    <property type="match status" value="1"/>
</dbReference>
<dbReference type="SMART" id="SM00739">
    <property type="entry name" value="KOW"/>
    <property type="match status" value="1"/>
</dbReference>
<dbReference type="SUPFAM" id="SSF50104">
    <property type="entry name" value="Translation proteins SH3-like domain"/>
    <property type="match status" value="1"/>
</dbReference>
<dbReference type="PROSITE" id="PS01108">
    <property type="entry name" value="RIBOSOMAL_L24"/>
    <property type="match status" value="1"/>
</dbReference>
<reference key="1">
    <citation type="submission" date="2006-06" db="EMBL/GenBank/DDBJ databases">
        <title>Complete sequence of chromosome of Mesorhizobium sp. BNC1.</title>
        <authorList>
            <consortium name="US DOE Joint Genome Institute"/>
            <person name="Copeland A."/>
            <person name="Lucas S."/>
            <person name="Lapidus A."/>
            <person name="Barry K."/>
            <person name="Detter J.C."/>
            <person name="Glavina del Rio T."/>
            <person name="Hammon N."/>
            <person name="Israni S."/>
            <person name="Dalin E."/>
            <person name="Tice H."/>
            <person name="Pitluck S."/>
            <person name="Chertkov O."/>
            <person name="Brettin T."/>
            <person name="Bruce D."/>
            <person name="Han C."/>
            <person name="Tapia R."/>
            <person name="Gilna P."/>
            <person name="Schmutz J."/>
            <person name="Larimer F."/>
            <person name="Land M."/>
            <person name="Hauser L."/>
            <person name="Kyrpides N."/>
            <person name="Mikhailova N."/>
            <person name="Richardson P."/>
        </authorList>
    </citation>
    <scope>NUCLEOTIDE SEQUENCE [LARGE SCALE GENOMIC DNA]</scope>
    <source>
        <strain>BNC1</strain>
    </source>
</reference>
<accession>Q11HR3</accession>
<keyword id="KW-0687">Ribonucleoprotein</keyword>
<keyword id="KW-0689">Ribosomal protein</keyword>
<keyword id="KW-0694">RNA-binding</keyword>
<keyword id="KW-0699">rRNA-binding</keyword>
<comment type="function">
    <text evidence="1">One of two assembly initiator proteins, it binds directly to the 5'-end of the 23S rRNA, where it nucleates assembly of the 50S subunit.</text>
</comment>
<comment type="function">
    <text evidence="1">One of the proteins that surrounds the polypeptide exit tunnel on the outside of the subunit.</text>
</comment>
<comment type="subunit">
    <text evidence="1">Part of the 50S ribosomal subunit.</text>
</comment>
<comment type="similarity">
    <text evidence="1">Belongs to the universal ribosomal protein uL24 family.</text>
</comment>
<organism>
    <name type="scientific">Chelativorans sp. (strain BNC1)</name>
    <dbReference type="NCBI Taxonomy" id="266779"/>
    <lineage>
        <taxon>Bacteria</taxon>
        <taxon>Pseudomonadati</taxon>
        <taxon>Pseudomonadota</taxon>
        <taxon>Alphaproteobacteria</taxon>
        <taxon>Hyphomicrobiales</taxon>
        <taxon>Phyllobacteriaceae</taxon>
        <taxon>Chelativorans</taxon>
    </lineage>
</organism>
<feature type="chain" id="PRO_1000052246" description="Large ribosomal subunit protein uL24">
    <location>
        <begin position="1"/>
        <end position="104"/>
    </location>
</feature>
<gene>
    <name evidence="1" type="primary">rplX</name>
    <name type="ordered locus">Meso_1667</name>
</gene>
<protein>
    <recommendedName>
        <fullName evidence="1">Large ribosomal subunit protein uL24</fullName>
    </recommendedName>
    <alternativeName>
        <fullName evidence="2">50S ribosomal protein L24</fullName>
    </alternativeName>
</protein>
<evidence type="ECO:0000255" key="1">
    <source>
        <dbReference type="HAMAP-Rule" id="MF_01326"/>
    </source>
</evidence>
<evidence type="ECO:0000305" key="2"/>
<name>RL24_CHESB</name>
<sequence length="104" mass="11434">MQKIKKGDKVVVLSGRDKGRTGEVLKMMPKEDRALVRGVNLVRRHQKQTPQAEGGIITKEAPIHVSNLALADPKDGKPTRVGFKIQEDGKKVRVAKRSGELIDG</sequence>
<proteinExistence type="inferred from homology"/>